<proteinExistence type="inferred from homology"/>
<protein>
    <recommendedName>
        <fullName evidence="1">Large ribosomal subunit protein uL16</fullName>
    </recommendedName>
    <alternativeName>
        <fullName evidence="2">50S ribosomal protein L10e</fullName>
    </alternativeName>
</protein>
<evidence type="ECO:0000255" key="1">
    <source>
        <dbReference type="HAMAP-Rule" id="MF_00448"/>
    </source>
</evidence>
<evidence type="ECO:0000305" key="2"/>
<comment type="similarity">
    <text evidence="1">Belongs to the universal ribosomal protein uL16 family.</text>
</comment>
<reference key="1">
    <citation type="journal article" date="2005" name="Genome Res.">
        <title>Living with two extremes: conclusions from the genome sequence of Natronomonas pharaonis.</title>
        <authorList>
            <person name="Falb M."/>
            <person name="Pfeiffer F."/>
            <person name="Palm P."/>
            <person name="Rodewald K."/>
            <person name="Hickmann V."/>
            <person name="Tittor J."/>
            <person name="Oesterhelt D."/>
        </authorList>
    </citation>
    <scope>NUCLEOTIDE SEQUENCE [LARGE SCALE GENOMIC DNA]</scope>
    <source>
        <strain>ATCC 35678 / DSM 2160 / CIP 103997 / JCM 8858 / NBRC 14720 / NCIMB 2260 / Gabara</strain>
    </source>
</reference>
<keyword id="KW-1185">Reference proteome</keyword>
<keyword id="KW-0687">Ribonucleoprotein</keyword>
<keyword id="KW-0689">Ribosomal protein</keyword>
<organism>
    <name type="scientific">Natronomonas pharaonis (strain ATCC 35678 / DSM 2160 / CIP 103997 / JCM 8858 / NBRC 14720 / NCIMB 2260 / Gabara)</name>
    <name type="common">Halobacterium pharaonis</name>
    <dbReference type="NCBI Taxonomy" id="348780"/>
    <lineage>
        <taxon>Archaea</taxon>
        <taxon>Methanobacteriati</taxon>
        <taxon>Methanobacteriota</taxon>
        <taxon>Stenosarchaea group</taxon>
        <taxon>Halobacteria</taxon>
        <taxon>Halobacteriales</taxon>
        <taxon>Haloarculaceae</taxon>
        <taxon>Natronomonas</taxon>
    </lineage>
</organism>
<dbReference type="EMBL" id="CR936257">
    <property type="protein sequence ID" value="CAI48299.1"/>
    <property type="molecule type" value="Genomic_DNA"/>
</dbReference>
<dbReference type="RefSeq" id="WP_011321937.1">
    <property type="nucleotide sequence ID" value="NC_007426.1"/>
</dbReference>
<dbReference type="SMR" id="Q3IU82"/>
<dbReference type="STRING" id="348780.NP_0416A"/>
<dbReference type="EnsemblBacteria" id="CAI48299">
    <property type="protein sequence ID" value="CAI48299"/>
    <property type="gene ID" value="NP_0416A"/>
</dbReference>
<dbReference type="GeneID" id="3703120"/>
<dbReference type="KEGG" id="nph:NP_0416A"/>
<dbReference type="eggNOG" id="arCOG04113">
    <property type="taxonomic scope" value="Archaea"/>
</dbReference>
<dbReference type="HOGENOM" id="CLU_084051_0_2_2"/>
<dbReference type="OrthoDB" id="30538at2157"/>
<dbReference type="Proteomes" id="UP000002698">
    <property type="component" value="Chromosome"/>
</dbReference>
<dbReference type="GO" id="GO:1990904">
    <property type="term" value="C:ribonucleoprotein complex"/>
    <property type="evidence" value="ECO:0007669"/>
    <property type="project" value="UniProtKB-KW"/>
</dbReference>
<dbReference type="GO" id="GO:0005840">
    <property type="term" value="C:ribosome"/>
    <property type="evidence" value="ECO:0007669"/>
    <property type="project" value="UniProtKB-KW"/>
</dbReference>
<dbReference type="GO" id="GO:0003735">
    <property type="term" value="F:structural constituent of ribosome"/>
    <property type="evidence" value="ECO:0007669"/>
    <property type="project" value="InterPro"/>
</dbReference>
<dbReference type="GO" id="GO:0006412">
    <property type="term" value="P:translation"/>
    <property type="evidence" value="ECO:0007669"/>
    <property type="project" value="UniProtKB-UniRule"/>
</dbReference>
<dbReference type="Gene3D" id="3.90.1170.10">
    <property type="entry name" value="Ribosomal protein L10e/L16"/>
    <property type="match status" value="1"/>
</dbReference>
<dbReference type="HAMAP" id="MF_00448">
    <property type="entry name" value="Ribosomal_uL16_arch"/>
    <property type="match status" value="1"/>
</dbReference>
<dbReference type="InterPro" id="IPR047873">
    <property type="entry name" value="Ribosomal_uL16"/>
</dbReference>
<dbReference type="InterPro" id="IPR022981">
    <property type="entry name" value="Ribosomal_uL16_arc"/>
</dbReference>
<dbReference type="InterPro" id="IPR018255">
    <property type="entry name" value="Ribosomal_uL16_CS_euk_arc"/>
</dbReference>
<dbReference type="InterPro" id="IPR001197">
    <property type="entry name" value="Ribosomal_uL16_euk_arch"/>
</dbReference>
<dbReference type="InterPro" id="IPR036920">
    <property type="entry name" value="Ribosomal_uL16_sf"/>
</dbReference>
<dbReference type="NCBIfam" id="NF003239">
    <property type="entry name" value="PRK04199.1-4"/>
    <property type="match status" value="1"/>
</dbReference>
<dbReference type="NCBIfam" id="NF003241">
    <property type="entry name" value="PRK04199.1-6"/>
    <property type="match status" value="1"/>
</dbReference>
<dbReference type="PANTHER" id="PTHR11726">
    <property type="entry name" value="60S RIBOSOMAL PROTEIN L10"/>
    <property type="match status" value="1"/>
</dbReference>
<dbReference type="Pfam" id="PF00252">
    <property type="entry name" value="Ribosomal_L16"/>
    <property type="match status" value="1"/>
</dbReference>
<dbReference type="PIRSF" id="PIRSF005590">
    <property type="entry name" value="Ribosomal_L10"/>
    <property type="match status" value="1"/>
</dbReference>
<dbReference type="SUPFAM" id="SSF54686">
    <property type="entry name" value="Ribosomal protein L16p/L10e"/>
    <property type="match status" value="1"/>
</dbReference>
<dbReference type="PROSITE" id="PS01257">
    <property type="entry name" value="RIBOSOMAL_L10E"/>
    <property type="match status" value="1"/>
</dbReference>
<feature type="chain" id="PRO_1000026193" description="Large ribosomal subunit protein uL16">
    <location>
        <begin position="1"/>
        <end position="177"/>
    </location>
</feature>
<sequence>MSDKPASMYRDIDKPAYTRREYITGIPGSKVAQYKMGNFEADPEDYEVQISLIVDEEVQIRHGSLEASRLSANRRMLKELGEDGDYKMILRKFPHQVIRENKQATGAGADRVSDGMRQAFGKIVGTAARINKGERVFTIWCHPEDADAAKDAFRRAYNKISPPCTIKVERGEELLIA</sequence>
<name>RL10E_NATPD</name>
<gene>
    <name evidence="1" type="primary">rpl10e</name>
    <name type="ordered locus">NP_0416A</name>
</gene>
<accession>Q3IU82</accession>